<sequence>MQQYSILVLHGPNLNLLGKREPNIYGSVTLDEINLLLSEEAKNLDVTVTCVQSNHEGILIDTIHQAWGLHQGIIINAGAYTHTSVAIRDALSAVKIPTVEVHLSNIYQRETFRHHSYIAPVAIGQISGFGVGSYRLGLLAIVEYLRKLENNH</sequence>
<feature type="chain" id="PRO_1000118276" description="3-dehydroquinate dehydratase">
    <location>
        <begin position="1"/>
        <end position="152"/>
    </location>
</feature>
<feature type="active site" description="Proton acceptor" evidence="1">
    <location>
        <position position="25"/>
    </location>
</feature>
<feature type="active site" description="Proton donor" evidence="1">
    <location>
        <position position="102"/>
    </location>
</feature>
<feature type="binding site" evidence="1">
    <location>
        <position position="76"/>
    </location>
    <ligand>
        <name>substrate</name>
    </ligand>
</feature>
<feature type="binding site" evidence="1">
    <location>
        <position position="82"/>
    </location>
    <ligand>
        <name>substrate</name>
    </ligand>
</feature>
<feature type="binding site" evidence="1">
    <location>
        <position position="89"/>
    </location>
    <ligand>
        <name>substrate</name>
    </ligand>
</feature>
<feature type="binding site" evidence="1">
    <location>
        <begin position="103"/>
        <end position="104"/>
    </location>
    <ligand>
        <name>substrate</name>
    </ligand>
</feature>
<feature type="binding site" evidence="1">
    <location>
        <position position="113"/>
    </location>
    <ligand>
        <name>substrate</name>
    </ligand>
</feature>
<feature type="site" description="Transition state stabilizer" evidence="1">
    <location>
        <position position="20"/>
    </location>
</feature>
<keyword id="KW-0028">Amino-acid biosynthesis</keyword>
<keyword id="KW-0057">Aromatic amino acid biosynthesis</keyword>
<keyword id="KW-0456">Lyase</keyword>
<keyword id="KW-1185">Reference proteome</keyword>
<dbReference type="EC" id="4.2.1.10" evidence="1"/>
<dbReference type="EMBL" id="CP001291">
    <property type="protein sequence ID" value="ACK71862.1"/>
    <property type="molecule type" value="Genomic_DNA"/>
</dbReference>
<dbReference type="RefSeq" id="WP_015955457.1">
    <property type="nucleotide sequence ID" value="NC_011729.1"/>
</dbReference>
<dbReference type="SMR" id="B7KFE6"/>
<dbReference type="STRING" id="65393.PCC7424_3469"/>
<dbReference type="KEGG" id="cyc:PCC7424_3469"/>
<dbReference type="eggNOG" id="COG0757">
    <property type="taxonomic scope" value="Bacteria"/>
</dbReference>
<dbReference type="HOGENOM" id="CLU_090968_1_0_3"/>
<dbReference type="OrthoDB" id="9790793at2"/>
<dbReference type="UniPathway" id="UPA00053">
    <property type="reaction ID" value="UER00086"/>
</dbReference>
<dbReference type="Proteomes" id="UP000002384">
    <property type="component" value="Chromosome"/>
</dbReference>
<dbReference type="GO" id="GO:0003855">
    <property type="term" value="F:3-dehydroquinate dehydratase activity"/>
    <property type="evidence" value="ECO:0007669"/>
    <property type="project" value="UniProtKB-UniRule"/>
</dbReference>
<dbReference type="GO" id="GO:0008652">
    <property type="term" value="P:amino acid biosynthetic process"/>
    <property type="evidence" value="ECO:0007669"/>
    <property type="project" value="UniProtKB-KW"/>
</dbReference>
<dbReference type="GO" id="GO:0009073">
    <property type="term" value="P:aromatic amino acid family biosynthetic process"/>
    <property type="evidence" value="ECO:0007669"/>
    <property type="project" value="UniProtKB-KW"/>
</dbReference>
<dbReference type="GO" id="GO:0009423">
    <property type="term" value="P:chorismate biosynthetic process"/>
    <property type="evidence" value="ECO:0007669"/>
    <property type="project" value="UniProtKB-UniRule"/>
</dbReference>
<dbReference type="GO" id="GO:0019631">
    <property type="term" value="P:quinate catabolic process"/>
    <property type="evidence" value="ECO:0007669"/>
    <property type="project" value="TreeGrafter"/>
</dbReference>
<dbReference type="CDD" id="cd00466">
    <property type="entry name" value="DHQase_II"/>
    <property type="match status" value="1"/>
</dbReference>
<dbReference type="Gene3D" id="3.40.50.9100">
    <property type="entry name" value="Dehydroquinase, class II"/>
    <property type="match status" value="1"/>
</dbReference>
<dbReference type="HAMAP" id="MF_00169">
    <property type="entry name" value="AroQ"/>
    <property type="match status" value="1"/>
</dbReference>
<dbReference type="InterPro" id="IPR001874">
    <property type="entry name" value="DHquinase_II"/>
</dbReference>
<dbReference type="InterPro" id="IPR018509">
    <property type="entry name" value="DHquinase_II_CS"/>
</dbReference>
<dbReference type="InterPro" id="IPR036441">
    <property type="entry name" value="DHquinase_II_sf"/>
</dbReference>
<dbReference type="NCBIfam" id="TIGR01088">
    <property type="entry name" value="aroQ"/>
    <property type="match status" value="1"/>
</dbReference>
<dbReference type="NCBIfam" id="NF003804">
    <property type="entry name" value="PRK05395.1-1"/>
    <property type="match status" value="1"/>
</dbReference>
<dbReference type="NCBIfam" id="NF003805">
    <property type="entry name" value="PRK05395.1-2"/>
    <property type="match status" value="1"/>
</dbReference>
<dbReference type="NCBIfam" id="NF003806">
    <property type="entry name" value="PRK05395.1-3"/>
    <property type="match status" value="1"/>
</dbReference>
<dbReference type="NCBIfam" id="NF003807">
    <property type="entry name" value="PRK05395.1-4"/>
    <property type="match status" value="1"/>
</dbReference>
<dbReference type="PANTHER" id="PTHR21272">
    <property type="entry name" value="CATABOLIC 3-DEHYDROQUINASE"/>
    <property type="match status" value="1"/>
</dbReference>
<dbReference type="PANTHER" id="PTHR21272:SF3">
    <property type="entry name" value="CATABOLIC 3-DEHYDROQUINASE"/>
    <property type="match status" value="1"/>
</dbReference>
<dbReference type="Pfam" id="PF01220">
    <property type="entry name" value="DHquinase_II"/>
    <property type="match status" value="1"/>
</dbReference>
<dbReference type="PIRSF" id="PIRSF001399">
    <property type="entry name" value="DHquinase_II"/>
    <property type="match status" value="1"/>
</dbReference>
<dbReference type="SUPFAM" id="SSF52304">
    <property type="entry name" value="Type II 3-dehydroquinate dehydratase"/>
    <property type="match status" value="1"/>
</dbReference>
<dbReference type="PROSITE" id="PS01029">
    <property type="entry name" value="DEHYDROQUINASE_II"/>
    <property type="match status" value="1"/>
</dbReference>
<organism>
    <name type="scientific">Gloeothece citriformis (strain PCC 7424)</name>
    <name type="common">Cyanothece sp. (strain PCC 7424)</name>
    <dbReference type="NCBI Taxonomy" id="65393"/>
    <lineage>
        <taxon>Bacteria</taxon>
        <taxon>Bacillati</taxon>
        <taxon>Cyanobacteriota</taxon>
        <taxon>Cyanophyceae</taxon>
        <taxon>Oscillatoriophycideae</taxon>
        <taxon>Chroococcales</taxon>
        <taxon>Aphanothecaceae</taxon>
        <taxon>Gloeothece</taxon>
        <taxon>Gloeothece citriformis</taxon>
    </lineage>
</organism>
<proteinExistence type="inferred from homology"/>
<accession>B7KFE6</accession>
<gene>
    <name evidence="1" type="primary">aroQ</name>
    <name type="ordered locus">PCC7424_3469</name>
</gene>
<name>AROQ_GLOC7</name>
<comment type="function">
    <text evidence="1">Catalyzes a trans-dehydration via an enolate intermediate.</text>
</comment>
<comment type="catalytic activity">
    <reaction evidence="1">
        <text>3-dehydroquinate = 3-dehydroshikimate + H2O</text>
        <dbReference type="Rhea" id="RHEA:21096"/>
        <dbReference type="ChEBI" id="CHEBI:15377"/>
        <dbReference type="ChEBI" id="CHEBI:16630"/>
        <dbReference type="ChEBI" id="CHEBI:32364"/>
        <dbReference type="EC" id="4.2.1.10"/>
    </reaction>
</comment>
<comment type="pathway">
    <text evidence="1">Metabolic intermediate biosynthesis; chorismate biosynthesis; chorismate from D-erythrose 4-phosphate and phosphoenolpyruvate: step 3/7.</text>
</comment>
<comment type="subunit">
    <text evidence="1">Homododecamer.</text>
</comment>
<comment type="similarity">
    <text evidence="1">Belongs to the type-II 3-dehydroquinase family.</text>
</comment>
<protein>
    <recommendedName>
        <fullName evidence="1">3-dehydroquinate dehydratase</fullName>
        <shortName evidence="1">3-dehydroquinase</shortName>
        <ecNumber evidence="1">4.2.1.10</ecNumber>
    </recommendedName>
    <alternativeName>
        <fullName evidence="1">Type II DHQase</fullName>
    </alternativeName>
</protein>
<evidence type="ECO:0000255" key="1">
    <source>
        <dbReference type="HAMAP-Rule" id="MF_00169"/>
    </source>
</evidence>
<reference key="1">
    <citation type="journal article" date="2011" name="MBio">
        <title>Novel metabolic attributes of the genus Cyanothece, comprising a group of unicellular nitrogen-fixing Cyanobacteria.</title>
        <authorList>
            <person name="Bandyopadhyay A."/>
            <person name="Elvitigala T."/>
            <person name="Welsh E."/>
            <person name="Stockel J."/>
            <person name="Liberton M."/>
            <person name="Min H."/>
            <person name="Sherman L.A."/>
            <person name="Pakrasi H.B."/>
        </authorList>
    </citation>
    <scope>NUCLEOTIDE SEQUENCE [LARGE SCALE GENOMIC DNA]</scope>
    <source>
        <strain>PCC 7424</strain>
    </source>
</reference>